<dbReference type="EMBL" id="CU928160">
    <property type="protein sequence ID" value="CAQ98703.1"/>
    <property type="molecule type" value="Genomic_DNA"/>
</dbReference>
<dbReference type="RefSeq" id="WP_000219686.1">
    <property type="nucleotide sequence ID" value="NC_011741.1"/>
</dbReference>
<dbReference type="SMR" id="B7M1J8"/>
<dbReference type="KEGG" id="ecr:ECIAI1_1848"/>
<dbReference type="HOGENOM" id="CLU_049702_0_0_6"/>
<dbReference type="HAMAP" id="MF_01232">
    <property type="entry name" value="UPF0229"/>
    <property type="match status" value="1"/>
</dbReference>
<dbReference type="InterPro" id="IPR006698">
    <property type="entry name" value="UPF0229"/>
</dbReference>
<dbReference type="NCBIfam" id="NF003707">
    <property type="entry name" value="PRK05325.1-2"/>
    <property type="match status" value="1"/>
</dbReference>
<dbReference type="NCBIfam" id="NF003708">
    <property type="entry name" value="PRK05325.1-3"/>
    <property type="match status" value="1"/>
</dbReference>
<dbReference type="PANTHER" id="PTHR30510">
    <property type="entry name" value="UPF0229 PROTEIN YEAH"/>
    <property type="match status" value="1"/>
</dbReference>
<dbReference type="PANTHER" id="PTHR30510:SF2">
    <property type="entry name" value="UPF0229 PROTEIN YEAH"/>
    <property type="match status" value="1"/>
</dbReference>
<dbReference type="Pfam" id="PF04285">
    <property type="entry name" value="DUF444"/>
    <property type="match status" value="1"/>
</dbReference>
<protein>
    <recommendedName>
        <fullName evidence="1">UPF0229 protein YeaH</fullName>
    </recommendedName>
</protein>
<organism>
    <name type="scientific">Escherichia coli O8 (strain IAI1)</name>
    <dbReference type="NCBI Taxonomy" id="585034"/>
    <lineage>
        <taxon>Bacteria</taxon>
        <taxon>Pseudomonadati</taxon>
        <taxon>Pseudomonadota</taxon>
        <taxon>Gammaproteobacteria</taxon>
        <taxon>Enterobacterales</taxon>
        <taxon>Enterobacteriaceae</taxon>
        <taxon>Escherichia</taxon>
    </lineage>
</organism>
<accession>B7M1J8</accession>
<proteinExistence type="inferred from homology"/>
<name>YEAH_ECO8A</name>
<comment type="similarity">
    <text evidence="1">Belongs to the UPF0229 family.</text>
</comment>
<evidence type="ECO:0000255" key="1">
    <source>
        <dbReference type="HAMAP-Rule" id="MF_01232"/>
    </source>
</evidence>
<evidence type="ECO:0000256" key="2">
    <source>
        <dbReference type="SAM" id="MobiDB-lite"/>
    </source>
</evidence>
<feature type="chain" id="PRO_1000139642" description="UPF0229 protein YeaH">
    <location>
        <begin position="1"/>
        <end position="427"/>
    </location>
</feature>
<feature type="region of interest" description="Disordered" evidence="2">
    <location>
        <begin position="79"/>
        <end position="110"/>
    </location>
</feature>
<feature type="compositionally biased region" description="Basic and acidic residues" evidence="2">
    <location>
        <begin position="79"/>
        <end position="90"/>
    </location>
</feature>
<feature type="compositionally biased region" description="Gly residues" evidence="2">
    <location>
        <begin position="92"/>
        <end position="102"/>
    </location>
</feature>
<gene>
    <name evidence="1" type="primary">yeaH</name>
    <name type="ordered locus">ECIAI1_1848</name>
</gene>
<reference key="1">
    <citation type="journal article" date="2009" name="PLoS Genet.">
        <title>Organised genome dynamics in the Escherichia coli species results in highly diverse adaptive paths.</title>
        <authorList>
            <person name="Touchon M."/>
            <person name="Hoede C."/>
            <person name="Tenaillon O."/>
            <person name="Barbe V."/>
            <person name="Baeriswyl S."/>
            <person name="Bidet P."/>
            <person name="Bingen E."/>
            <person name="Bonacorsi S."/>
            <person name="Bouchier C."/>
            <person name="Bouvet O."/>
            <person name="Calteau A."/>
            <person name="Chiapello H."/>
            <person name="Clermont O."/>
            <person name="Cruveiller S."/>
            <person name="Danchin A."/>
            <person name="Diard M."/>
            <person name="Dossat C."/>
            <person name="Karoui M.E."/>
            <person name="Frapy E."/>
            <person name="Garry L."/>
            <person name="Ghigo J.M."/>
            <person name="Gilles A.M."/>
            <person name="Johnson J."/>
            <person name="Le Bouguenec C."/>
            <person name="Lescat M."/>
            <person name="Mangenot S."/>
            <person name="Martinez-Jehanne V."/>
            <person name="Matic I."/>
            <person name="Nassif X."/>
            <person name="Oztas S."/>
            <person name="Petit M.A."/>
            <person name="Pichon C."/>
            <person name="Rouy Z."/>
            <person name="Ruf C.S."/>
            <person name="Schneider D."/>
            <person name="Tourret J."/>
            <person name="Vacherie B."/>
            <person name="Vallenet D."/>
            <person name="Medigue C."/>
            <person name="Rocha E.P.C."/>
            <person name="Denamur E."/>
        </authorList>
    </citation>
    <scope>NUCLEOTIDE SEQUENCE [LARGE SCALE GENOMIC DNA]</scope>
    <source>
        <strain>IAI1</strain>
    </source>
</reference>
<sequence>MTWFIDRRLNGKNKSMVNRQRFLRRYKAQIKQSISEAINKRSVTDVDSGESVSIPTEDISEPMFHQGRGGLRHRVHPGNDHFVQNDRIERPQGGGGGSGSGQGQASQDGEGQDEFVFQISKDEYLDLLFEDLALPNLKQNQQRQLTEYKTHRAGYTANGVPANISVVRSLQNSLARRTAMTAGKRRELHALEENLAIISNSEPAQLLEEERLRKEIAELRAKIERVPFIDTFDLRYKNYEKRPDPSSQAVMFCLMDVSGSMDQSTKDMAKRFYILLYLFLSRTYKNVEVVYIRHHTQAKEVDEHEFFYSQETGGTIVSSALKLMDEVVKERYNPAQWNIYAAQASDGDNWADDSPLCHEILAKKLLPVVRYYSYIEITRRAHQTLWREYEHLQSTFDNFAMQHIRDQDDIYPVFRELFHKQNATAKD</sequence>